<sequence>MKKGFSLPLWVTGAAKSAIKKLIGLPFEDYELIKIPKEKNLIKIKVHSAGLINEESQALGISFVDSGLDLDLTQNLEIWTIASLEKTYKTSNRPLDRINIIPGYGVGIDQKTSKICISDFAQKLLVENLLNIIPEGYTLNLEIVFPNGKFLAERTSNKSFGIVEGLSIIGTSAETFASASPDQLQNAKAQLKQIIANKVCDTIIFVIGENGLNLATSSNIKFPIIKVGNWIGPLLVDAAIQKIKTVILFGYHGKLIKLAGGIFHTHNHLADARIEILVYLAVKEEVPLEIIQKLSQSNTVEDALLVLESFSLSMADKLWNKLSDTIEKRSTEYINRYTKTDMKVGAIIFDRNRKIRWSGNNSKDYISAFKGF</sequence>
<proteinExistence type="inferred from homology"/>
<feature type="chain" id="PRO_0000141677" description="Cobalt-precorrin-5B C(1)-methyltransferase">
    <location>
        <begin position="1"/>
        <end position="372"/>
    </location>
</feature>
<accession>Q7V3N8</accession>
<organism>
    <name type="scientific">Prochlorococcus marinus subsp. pastoris (strain CCMP1986 / NIES-2087 / MED4)</name>
    <dbReference type="NCBI Taxonomy" id="59919"/>
    <lineage>
        <taxon>Bacteria</taxon>
        <taxon>Bacillati</taxon>
        <taxon>Cyanobacteriota</taxon>
        <taxon>Cyanophyceae</taxon>
        <taxon>Synechococcales</taxon>
        <taxon>Prochlorococcaceae</taxon>
        <taxon>Prochlorococcus</taxon>
    </lineage>
</organism>
<comment type="function">
    <text evidence="1">Catalyzes the methylation of C-1 in cobalt-precorrin-5B to form cobalt-precorrin-6A.</text>
</comment>
<comment type="catalytic activity">
    <reaction evidence="1">
        <text>Co-precorrin-5B + S-adenosyl-L-methionine = Co-precorrin-6A + S-adenosyl-L-homocysteine</text>
        <dbReference type="Rhea" id="RHEA:26285"/>
        <dbReference type="ChEBI" id="CHEBI:57856"/>
        <dbReference type="ChEBI" id="CHEBI:59789"/>
        <dbReference type="ChEBI" id="CHEBI:60063"/>
        <dbReference type="ChEBI" id="CHEBI:60064"/>
        <dbReference type="EC" id="2.1.1.195"/>
    </reaction>
</comment>
<comment type="pathway">
    <text evidence="1">Cofactor biosynthesis; adenosylcobalamin biosynthesis; cob(II)yrinate a,c-diamide from sirohydrochlorin (anaerobic route): step 6/10.</text>
</comment>
<comment type="similarity">
    <text evidence="1">Belongs to the CbiD family.</text>
</comment>
<protein>
    <recommendedName>
        <fullName evidence="1">Cobalt-precorrin-5B C(1)-methyltransferase</fullName>
        <ecNumber evidence="1">2.1.1.195</ecNumber>
    </recommendedName>
    <alternativeName>
        <fullName evidence="1">Cobalt-precorrin-6A synthase</fullName>
    </alternativeName>
</protein>
<keyword id="KW-0169">Cobalamin biosynthesis</keyword>
<keyword id="KW-0489">Methyltransferase</keyword>
<keyword id="KW-0949">S-adenosyl-L-methionine</keyword>
<keyword id="KW-0808">Transferase</keyword>
<evidence type="ECO:0000255" key="1">
    <source>
        <dbReference type="HAMAP-Rule" id="MF_00787"/>
    </source>
</evidence>
<name>CBID_PROMP</name>
<gene>
    <name evidence="1" type="primary">cbiD</name>
    <name type="ordered locus">PMM0036</name>
</gene>
<reference key="1">
    <citation type="journal article" date="2003" name="Nature">
        <title>Genome divergence in two Prochlorococcus ecotypes reflects oceanic niche differentiation.</title>
        <authorList>
            <person name="Rocap G."/>
            <person name="Larimer F.W."/>
            <person name="Lamerdin J.E."/>
            <person name="Malfatti S."/>
            <person name="Chain P."/>
            <person name="Ahlgren N.A."/>
            <person name="Arellano A."/>
            <person name="Coleman M."/>
            <person name="Hauser L."/>
            <person name="Hess W.R."/>
            <person name="Johnson Z.I."/>
            <person name="Land M.L."/>
            <person name="Lindell D."/>
            <person name="Post A.F."/>
            <person name="Regala W."/>
            <person name="Shah M."/>
            <person name="Shaw S.L."/>
            <person name="Steglich C."/>
            <person name="Sullivan M.B."/>
            <person name="Ting C.S."/>
            <person name="Tolonen A."/>
            <person name="Webb E.A."/>
            <person name="Zinser E.R."/>
            <person name="Chisholm S.W."/>
        </authorList>
    </citation>
    <scope>NUCLEOTIDE SEQUENCE [LARGE SCALE GENOMIC DNA]</scope>
    <source>
        <strain>CCMP1986 / NIES-2087 / MED4</strain>
    </source>
</reference>
<dbReference type="EC" id="2.1.1.195" evidence="1"/>
<dbReference type="EMBL" id="BX548174">
    <property type="protein sequence ID" value="CAE18495.1"/>
    <property type="molecule type" value="Genomic_DNA"/>
</dbReference>
<dbReference type="RefSeq" id="WP_011131674.1">
    <property type="nucleotide sequence ID" value="NC_005072.1"/>
</dbReference>
<dbReference type="SMR" id="Q7V3N8"/>
<dbReference type="STRING" id="59919.PMM0036"/>
<dbReference type="KEGG" id="pmm:PMM0036"/>
<dbReference type="eggNOG" id="COG1903">
    <property type="taxonomic scope" value="Bacteria"/>
</dbReference>
<dbReference type="HOGENOM" id="CLU_041273_1_2_3"/>
<dbReference type="OrthoDB" id="6439987at2"/>
<dbReference type="UniPathway" id="UPA00148">
    <property type="reaction ID" value="UER00227"/>
</dbReference>
<dbReference type="Proteomes" id="UP000001026">
    <property type="component" value="Chromosome"/>
</dbReference>
<dbReference type="GO" id="GO:0043780">
    <property type="term" value="F:cobalt-precorrin-5B C1-methyltransferase activity"/>
    <property type="evidence" value="ECO:0007669"/>
    <property type="project" value="RHEA"/>
</dbReference>
<dbReference type="GO" id="GO:0019251">
    <property type="term" value="P:anaerobic cobalamin biosynthetic process"/>
    <property type="evidence" value="ECO:0007669"/>
    <property type="project" value="UniProtKB-UniRule"/>
</dbReference>
<dbReference type="GO" id="GO:0032259">
    <property type="term" value="P:methylation"/>
    <property type="evidence" value="ECO:0007669"/>
    <property type="project" value="UniProtKB-KW"/>
</dbReference>
<dbReference type="Gene3D" id="3.30.2110.10">
    <property type="entry name" value="CbiD-like"/>
    <property type="match status" value="1"/>
</dbReference>
<dbReference type="HAMAP" id="MF_00787">
    <property type="entry name" value="CbiD"/>
    <property type="match status" value="1"/>
</dbReference>
<dbReference type="InterPro" id="IPR002748">
    <property type="entry name" value="CbiD"/>
</dbReference>
<dbReference type="InterPro" id="IPR036074">
    <property type="entry name" value="CbiD_sf"/>
</dbReference>
<dbReference type="NCBIfam" id="TIGR00312">
    <property type="entry name" value="cbiD"/>
    <property type="match status" value="1"/>
</dbReference>
<dbReference type="PANTHER" id="PTHR35863">
    <property type="entry name" value="COBALT-PRECORRIN-5B C(1)-METHYLTRANSFERASE"/>
    <property type="match status" value="1"/>
</dbReference>
<dbReference type="PANTHER" id="PTHR35863:SF1">
    <property type="entry name" value="COBALT-PRECORRIN-5B C(1)-METHYLTRANSFERASE"/>
    <property type="match status" value="1"/>
</dbReference>
<dbReference type="Pfam" id="PF01888">
    <property type="entry name" value="CbiD"/>
    <property type="match status" value="1"/>
</dbReference>
<dbReference type="PIRSF" id="PIRSF026782">
    <property type="entry name" value="CbiD"/>
    <property type="match status" value="1"/>
</dbReference>
<dbReference type="SUPFAM" id="SSF111342">
    <property type="entry name" value="CbiD-like"/>
    <property type="match status" value="1"/>
</dbReference>